<comment type="function">
    <text evidence="1">Probable transcriptional activator. Binds to the consensus sequence 5'-AGGCCY-3' (By similarity).</text>
</comment>
<comment type="subcellular location">
    <subcellularLocation>
        <location>Nucleus</location>
    </subcellularLocation>
</comment>
<comment type="domain">
    <text evidence="1">The binding of ZFY to DNA is mediated by the interaction of the GGCC core base pairs with zinc fingers 12 and 13.</text>
</comment>
<comment type="similarity">
    <text evidence="5">Belongs to the krueppel C2H2-type zinc-finger protein family. ZFX/ZFY subfamily.</text>
</comment>
<reference key="1">
    <citation type="journal article" date="1989" name="Nucleic Acids Res.">
        <title>Sequence of cDNA for murine Zfy-1, a candidate for Tdy.</title>
        <authorList>
            <person name="Ashworth A."/>
            <person name="Swift S."/>
            <person name="Affara N."/>
        </authorList>
    </citation>
    <scope>NUCLEOTIDE SEQUENCE [MRNA]</scope>
    <source>
        <tissue>Testis</tissue>
    </source>
</reference>
<reference key="2">
    <citation type="journal article" date="2005" name="Science">
        <title>The transcriptional landscape of the mammalian genome.</title>
        <authorList>
            <person name="Carninci P."/>
            <person name="Kasukawa T."/>
            <person name="Katayama S."/>
            <person name="Gough J."/>
            <person name="Frith M.C."/>
            <person name="Maeda N."/>
            <person name="Oyama R."/>
            <person name="Ravasi T."/>
            <person name="Lenhard B."/>
            <person name="Wells C."/>
            <person name="Kodzius R."/>
            <person name="Shimokawa K."/>
            <person name="Bajic V.B."/>
            <person name="Brenner S.E."/>
            <person name="Batalov S."/>
            <person name="Forrest A.R."/>
            <person name="Zavolan M."/>
            <person name="Davis M.J."/>
            <person name="Wilming L.G."/>
            <person name="Aidinis V."/>
            <person name="Allen J.E."/>
            <person name="Ambesi-Impiombato A."/>
            <person name="Apweiler R."/>
            <person name="Aturaliya R.N."/>
            <person name="Bailey T.L."/>
            <person name="Bansal M."/>
            <person name="Baxter L."/>
            <person name="Beisel K.W."/>
            <person name="Bersano T."/>
            <person name="Bono H."/>
            <person name="Chalk A.M."/>
            <person name="Chiu K.P."/>
            <person name="Choudhary V."/>
            <person name="Christoffels A."/>
            <person name="Clutterbuck D.R."/>
            <person name="Crowe M.L."/>
            <person name="Dalla E."/>
            <person name="Dalrymple B.P."/>
            <person name="de Bono B."/>
            <person name="Della Gatta G."/>
            <person name="di Bernardo D."/>
            <person name="Down T."/>
            <person name="Engstrom P."/>
            <person name="Fagiolini M."/>
            <person name="Faulkner G."/>
            <person name="Fletcher C.F."/>
            <person name="Fukushima T."/>
            <person name="Furuno M."/>
            <person name="Futaki S."/>
            <person name="Gariboldi M."/>
            <person name="Georgii-Hemming P."/>
            <person name="Gingeras T.R."/>
            <person name="Gojobori T."/>
            <person name="Green R.E."/>
            <person name="Gustincich S."/>
            <person name="Harbers M."/>
            <person name="Hayashi Y."/>
            <person name="Hensch T.K."/>
            <person name="Hirokawa N."/>
            <person name="Hill D."/>
            <person name="Huminiecki L."/>
            <person name="Iacono M."/>
            <person name="Ikeo K."/>
            <person name="Iwama A."/>
            <person name="Ishikawa T."/>
            <person name="Jakt M."/>
            <person name="Kanapin A."/>
            <person name="Katoh M."/>
            <person name="Kawasawa Y."/>
            <person name="Kelso J."/>
            <person name="Kitamura H."/>
            <person name="Kitano H."/>
            <person name="Kollias G."/>
            <person name="Krishnan S.P."/>
            <person name="Kruger A."/>
            <person name="Kummerfeld S.K."/>
            <person name="Kurochkin I.V."/>
            <person name="Lareau L.F."/>
            <person name="Lazarevic D."/>
            <person name="Lipovich L."/>
            <person name="Liu J."/>
            <person name="Liuni S."/>
            <person name="McWilliam S."/>
            <person name="Madan Babu M."/>
            <person name="Madera M."/>
            <person name="Marchionni L."/>
            <person name="Matsuda H."/>
            <person name="Matsuzawa S."/>
            <person name="Miki H."/>
            <person name="Mignone F."/>
            <person name="Miyake S."/>
            <person name="Morris K."/>
            <person name="Mottagui-Tabar S."/>
            <person name="Mulder N."/>
            <person name="Nakano N."/>
            <person name="Nakauchi H."/>
            <person name="Ng P."/>
            <person name="Nilsson R."/>
            <person name="Nishiguchi S."/>
            <person name="Nishikawa S."/>
            <person name="Nori F."/>
            <person name="Ohara O."/>
            <person name="Okazaki Y."/>
            <person name="Orlando V."/>
            <person name="Pang K.C."/>
            <person name="Pavan W.J."/>
            <person name="Pavesi G."/>
            <person name="Pesole G."/>
            <person name="Petrovsky N."/>
            <person name="Piazza S."/>
            <person name="Reed J."/>
            <person name="Reid J.F."/>
            <person name="Ring B.Z."/>
            <person name="Ringwald M."/>
            <person name="Rost B."/>
            <person name="Ruan Y."/>
            <person name="Salzberg S.L."/>
            <person name="Sandelin A."/>
            <person name="Schneider C."/>
            <person name="Schoenbach C."/>
            <person name="Sekiguchi K."/>
            <person name="Semple C.A."/>
            <person name="Seno S."/>
            <person name="Sessa L."/>
            <person name="Sheng Y."/>
            <person name="Shibata Y."/>
            <person name="Shimada H."/>
            <person name="Shimada K."/>
            <person name="Silva D."/>
            <person name="Sinclair B."/>
            <person name="Sperling S."/>
            <person name="Stupka E."/>
            <person name="Sugiura K."/>
            <person name="Sultana R."/>
            <person name="Takenaka Y."/>
            <person name="Taki K."/>
            <person name="Tammoja K."/>
            <person name="Tan S.L."/>
            <person name="Tang S."/>
            <person name="Taylor M.S."/>
            <person name="Tegner J."/>
            <person name="Teichmann S.A."/>
            <person name="Ueda H.R."/>
            <person name="van Nimwegen E."/>
            <person name="Verardo R."/>
            <person name="Wei C.L."/>
            <person name="Yagi K."/>
            <person name="Yamanishi H."/>
            <person name="Zabarovsky E."/>
            <person name="Zhu S."/>
            <person name="Zimmer A."/>
            <person name="Hide W."/>
            <person name="Bult C."/>
            <person name="Grimmond S.M."/>
            <person name="Teasdale R.D."/>
            <person name="Liu E.T."/>
            <person name="Brusic V."/>
            <person name="Quackenbush J."/>
            <person name="Wahlestedt C."/>
            <person name="Mattick J.S."/>
            <person name="Hume D.A."/>
            <person name="Kai C."/>
            <person name="Sasaki D."/>
            <person name="Tomaru Y."/>
            <person name="Fukuda S."/>
            <person name="Kanamori-Katayama M."/>
            <person name="Suzuki M."/>
            <person name="Aoki J."/>
            <person name="Arakawa T."/>
            <person name="Iida J."/>
            <person name="Imamura K."/>
            <person name="Itoh M."/>
            <person name="Kato T."/>
            <person name="Kawaji H."/>
            <person name="Kawagashira N."/>
            <person name="Kawashima T."/>
            <person name="Kojima M."/>
            <person name="Kondo S."/>
            <person name="Konno H."/>
            <person name="Nakano K."/>
            <person name="Ninomiya N."/>
            <person name="Nishio T."/>
            <person name="Okada M."/>
            <person name="Plessy C."/>
            <person name="Shibata K."/>
            <person name="Shiraki T."/>
            <person name="Suzuki S."/>
            <person name="Tagami M."/>
            <person name="Waki K."/>
            <person name="Watahiki A."/>
            <person name="Okamura-Oho Y."/>
            <person name="Suzuki H."/>
            <person name="Kawai J."/>
            <person name="Hayashizaki Y."/>
        </authorList>
    </citation>
    <scope>NUCLEOTIDE SEQUENCE [LARGE SCALE MRNA]</scope>
    <source>
        <strain>C57BL/6J</strain>
        <tissue>Testis</tissue>
    </source>
</reference>
<reference key="3">
    <citation type="journal article" date="2009" name="PLoS Biol.">
        <title>Lineage-specific biology revealed by a finished genome assembly of the mouse.</title>
        <authorList>
            <person name="Church D.M."/>
            <person name="Goodstadt L."/>
            <person name="Hillier L.W."/>
            <person name="Zody M.C."/>
            <person name="Goldstein S."/>
            <person name="She X."/>
            <person name="Bult C.J."/>
            <person name="Agarwala R."/>
            <person name="Cherry J.L."/>
            <person name="DiCuccio M."/>
            <person name="Hlavina W."/>
            <person name="Kapustin Y."/>
            <person name="Meric P."/>
            <person name="Maglott D."/>
            <person name="Birtle Z."/>
            <person name="Marques A.C."/>
            <person name="Graves T."/>
            <person name="Zhou S."/>
            <person name="Teague B."/>
            <person name="Potamousis K."/>
            <person name="Churas C."/>
            <person name="Place M."/>
            <person name="Herschleb J."/>
            <person name="Runnheim R."/>
            <person name="Forrest D."/>
            <person name="Amos-Landgraf J."/>
            <person name="Schwartz D.C."/>
            <person name="Cheng Z."/>
            <person name="Lindblad-Toh K."/>
            <person name="Eichler E.E."/>
            <person name="Ponting C.P."/>
        </authorList>
    </citation>
    <scope>NUCLEOTIDE SEQUENCE [LARGE SCALE GENOMIC DNA]</scope>
    <source>
        <strain>C57BL/6J</strain>
    </source>
</reference>
<protein>
    <recommendedName>
        <fullName>Zinc finger Y-chromosomal protein 1</fullName>
    </recommendedName>
</protein>
<gene>
    <name type="primary">Zfy1</name>
    <name type="synonym">Zfy-1</name>
</gene>
<name>ZFY1_MOUSE</name>
<feature type="chain" id="PRO_0000047263" description="Zinc finger Y-chromosomal protein 1">
    <location>
        <begin position="1"/>
        <end position="782"/>
    </location>
</feature>
<feature type="zinc finger region" description="C2H2-type 1" evidence="3">
    <location>
        <begin position="403"/>
        <end position="425"/>
    </location>
</feature>
<feature type="zinc finger region" description="C2H2-type 2" evidence="3">
    <location>
        <begin position="434"/>
        <end position="456"/>
    </location>
</feature>
<feature type="zinc finger region" description="C2H2-type 3" evidence="3">
    <location>
        <begin position="466"/>
        <end position="488"/>
    </location>
</feature>
<feature type="zinc finger region" description="C2H2-type 4" evidence="3">
    <location>
        <begin position="497"/>
        <end position="520"/>
    </location>
</feature>
<feature type="zinc finger region" description="C2H2-type 5" evidence="3">
    <location>
        <begin position="526"/>
        <end position="548"/>
    </location>
</feature>
<feature type="zinc finger region" description="C2H2-type 6" evidence="3">
    <location>
        <begin position="554"/>
        <end position="577"/>
    </location>
</feature>
<feature type="zinc finger region" description="C2H2-type 7" evidence="3">
    <location>
        <begin position="583"/>
        <end position="605"/>
    </location>
</feature>
<feature type="zinc finger region" description="C2H2-type 8" evidence="3">
    <location>
        <begin position="611"/>
        <end position="634"/>
    </location>
</feature>
<feature type="zinc finger region" description="C2H2-type 9" evidence="3">
    <location>
        <begin position="640"/>
        <end position="662"/>
    </location>
</feature>
<feature type="zinc finger region" description="C2H2-type 10" evidence="3">
    <location>
        <begin position="668"/>
        <end position="691"/>
    </location>
</feature>
<feature type="zinc finger region" description="C2H2-type 11" evidence="3">
    <location>
        <begin position="697"/>
        <end position="719"/>
    </location>
</feature>
<feature type="zinc finger region" description="C2H2-type 12" evidence="3">
    <location>
        <begin position="725"/>
        <end position="748"/>
    </location>
</feature>
<feature type="zinc finger region" description="C2H2-type 13" evidence="3">
    <location>
        <begin position="754"/>
        <end position="777"/>
    </location>
</feature>
<feature type="region of interest" description="Disordered" evidence="4">
    <location>
        <begin position="211"/>
        <end position="233"/>
    </location>
</feature>
<feature type="region of interest" description="Disordered" evidence="4">
    <location>
        <begin position="360"/>
        <end position="386"/>
    </location>
</feature>
<feature type="short sequence motif" description="Nuclear localization signal" evidence="2">
    <location>
        <begin position="372"/>
        <end position="382"/>
    </location>
</feature>
<feature type="compositionally biased region" description="Polar residues" evidence="4">
    <location>
        <begin position="217"/>
        <end position="229"/>
    </location>
</feature>
<feature type="compositionally biased region" description="Basic residues" evidence="4">
    <location>
        <begin position="373"/>
        <end position="382"/>
    </location>
</feature>
<feature type="sequence conflict" description="In Ref. 1; CAA32552." evidence="5" ref="1">
    <original>L</original>
    <variation>S</variation>
    <location>
        <position position="8"/>
    </location>
</feature>
<feature type="sequence conflict" description="In Ref. 1; CAA32552." evidence="5" ref="1">
    <original>A</original>
    <variation>T</variation>
    <location>
        <position position="211"/>
    </location>
</feature>
<feature type="sequence conflict" description="In Ref. 1; CAA32552." evidence="5" ref="1">
    <original>G</original>
    <variation>E</variation>
    <location>
        <position position="226"/>
    </location>
</feature>
<feature type="sequence conflict" description="In Ref. 1; CAA32552." evidence="5" ref="1">
    <original>EL</original>
    <variation>DV</variation>
    <location>
        <begin position="253"/>
        <end position="254"/>
    </location>
</feature>
<feature type="sequence conflict" description="In Ref. 1; CAA32552." evidence="5" ref="1">
    <original>Q</original>
    <variation>K</variation>
    <location>
        <position position="388"/>
    </location>
</feature>
<feature type="sequence conflict" description="In Ref. 1; CAA32552." evidence="5" ref="1">
    <original>N</original>
    <variation>T</variation>
    <location>
        <position position="595"/>
    </location>
</feature>
<feature type="sequence conflict" description="In Ref. 2; BAC36419." evidence="5" ref="2">
    <original>D</original>
    <variation>N</variation>
    <location>
        <position position="679"/>
    </location>
</feature>
<keyword id="KW-0010">Activator</keyword>
<keyword id="KW-0238">DNA-binding</keyword>
<keyword id="KW-0479">Metal-binding</keyword>
<keyword id="KW-0539">Nucleus</keyword>
<keyword id="KW-1185">Reference proteome</keyword>
<keyword id="KW-0677">Repeat</keyword>
<keyword id="KW-0804">Transcription</keyword>
<keyword id="KW-0805">Transcription regulation</keyword>
<keyword id="KW-0862">Zinc</keyword>
<keyword id="KW-0863">Zinc-finger</keyword>
<evidence type="ECO:0000250" key="1"/>
<evidence type="ECO:0000255" key="2"/>
<evidence type="ECO:0000255" key="3">
    <source>
        <dbReference type="PROSITE-ProRule" id="PRU00042"/>
    </source>
</evidence>
<evidence type="ECO:0000256" key="4">
    <source>
        <dbReference type="SAM" id="MobiDB-lite"/>
    </source>
</evidence>
<evidence type="ECO:0000305" key="5"/>
<sequence>MDEDEIELTPEEEKSFFDGIGADAVHMDSDQIVVEVQETVFLANSDVTVHNFVPDNPGSVIIQDVIENVLIEDVHCSHILEETDISDNVIIPEQVLNLGTAEEVSLAQFLIPDILTSGITSTSLTMPEHVLMSEAIHVSDVGHFEQVIHDSLVETEVITDPITADTSDILVADCVSEAVLDSSGMPLEQQDNDKINCEDYLMMSLDEPSKADLEGSSEVTMNAESGTDSSKLDEASPEVIKVCILKADSEVDELGETIHAVESETKNGNEAEVTDQSTSIRVPRVNIYMSASDSQKEEEDTEVIVGDEDAGGTAADTPEHEQQMDVSEIKAAFLPIAWTAAYDNNSDEIEDQNVTASALLNQDESGGLDRVPKQKSKKKKRPESKQYQSAIFVAPDGQTLRVYPCMFCGKKFKTKRFLKRHTKNHPEYLANKKYHCTECDYSTNKKISLHNHMESHKLTIKTEKTTECDDCRKNLSHAGTLCTHKTMHTEKGVNKTCKCKFCDYETAEQTLLNHHLLVVHRKKFPHICGECGKGFRHPSALKKHIRVHTGEKPYECQYCEYKSADSSNLKTHIKSKHSKEIPLKCGICLLTFSDNKEAQQHAVLHQESRTHQCSHCNHKSSNSSDLKRHIISVHTKAYPHKCDMCSKGFHRPSELKKHVATHKSKKMHQCRHCDFNSPDPFLLSHHILSAHTKNVPFKCKRCKKEFQQQCELQTHMKTHSSRKVYQCEYCEYSTKDASGFKRHVISIHTKDYPHSCDFCKKGFRRPSEKNQHIMRHHKVGLP</sequence>
<accession>P10925</accession>
<accession>E9QKM5</accession>
<accession>Q8C638</accession>
<proteinExistence type="evidence at transcript level"/>
<organism>
    <name type="scientific">Mus musculus</name>
    <name type="common">Mouse</name>
    <dbReference type="NCBI Taxonomy" id="10090"/>
    <lineage>
        <taxon>Eukaryota</taxon>
        <taxon>Metazoa</taxon>
        <taxon>Chordata</taxon>
        <taxon>Craniata</taxon>
        <taxon>Vertebrata</taxon>
        <taxon>Euteleostomi</taxon>
        <taxon>Mammalia</taxon>
        <taxon>Eutheria</taxon>
        <taxon>Euarchontoglires</taxon>
        <taxon>Glires</taxon>
        <taxon>Rodentia</taxon>
        <taxon>Myomorpha</taxon>
        <taxon>Muroidea</taxon>
        <taxon>Muridae</taxon>
        <taxon>Murinae</taxon>
        <taxon>Mus</taxon>
        <taxon>Mus</taxon>
    </lineage>
</organism>
<dbReference type="EMBL" id="X14382">
    <property type="protein sequence ID" value="CAA32552.1"/>
    <property type="molecule type" value="mRNA"/>
</dbReference>
<dbReference type="EMBL" id="AK076618">
    <property type="protein sequence ID" value="BAC36419.1"/>
    <property type="molecule type" value="mRNA"/>
</dbReference>
<dbReference type="EMBL" id="AC139318">
    <property type="status" value="NOT_ANNOTATED_CDS"/>
    <property type="molecule type" value="Genomic_DNA"/>
</dbReference>
<dbReference type="CCDS" id="CCDS30539.1"/>
<dbReference type="PIR" id="S04047">
    <property type="entry name" value="S04047"/>
</dbReference>
<dbReference type="RefSeq" id="NP_033596.3">
    <property type="nucleotide sequence ID" value="NM_009570.4"/>
</dbReference>
<dbReference type="SMR" id="P10925"/>
<dbReference type="STRING" id="10090.ENSMUSP00000140600"/>
<dbReference type="iPTMnet" id="P10925"/>
<dbReference type="PhosphoSitePlus" id="P10925"/>
<dbReference type="PaxDb" id="10090-ENSMUSP00000069364"/>
<dbReference type="ProteomicsDB" id="302057"/>
<dbReference type="DNASU" id="22767"/>
<dbReference type="Ensembl" id="ENSMUST00000065545.6">
    <property type="protein sequence ID" value="ENSMUSP00000069364.5"/>
    <property type="gene ID" value="ENSMUSG00000053211.11"/>
</dbReference>
<dbReference type="Ensembl" id="ENSMUST00000189888.7">
    <property type="protein sequence ID" value="ENSMUSP00000140600.2"/>
    <property type="gene ID" value="ENSMUSG00000053211.11"/>
</dbReference>
<dbReference type="GeneID" id="22767"/>
<dbReference type="KEGG" id="mmu:22767"/>
<dbReference type="UCSC" id="uc009uyv.2">
    <property type="organism name" value="mouse"/>
</dbReference>
<dbReference type="AGR" id="MGI:99212"/>
<dbReference type="CTD" id="22767"/>
<dbReference type="MGI" id="MGI:99212">
    <property type="gene designation" value="Zfy1"/>
</dbReference>
<dbReference type="VEuPathDB" id="HostDB:ENSMUSG00000053211"/>
<dbReference type="eggNOG" id="KOG1721">
    <property type="taxonomic scope" value="Eukaryota"/>
</dbReference>
<dbReference type="GeneTree" id="ENSGT00940000164731"/>
<dbReference type="HOGENOM" id="CLU_021097_0_0_1"/>
<dbReference type="InParanoid" id="P10925"/>
<dbReference type="OMA" id="HINEFHP"/>
<dbReference type="OrthoDB" id="70057at9989"/>
<dbReference type="PhylomeDB" id="P10925"/>
<dbReference type="TreeFam" id="TF335557"/>
<dbReference type="BioGRID-ORCS" id="22767">
    <property type="hits" value="2 hits in 77 CRISPR screens"/>
</dbReference>
<dbReference type="ChiTaRS" id="Zfy1">
    <property type="organism name" value="mouse"/>
</dbReference>
<dbReference type="PRO" id="PR:P10925"/>
<dbReference type="Proteomes" id="UP000000589">
    <property type="component" value="Chromosome Y"/>
</dbReference>
<dbReference type="RNAct" id="P10925">
    <property type="molecule type" value="protein"/>
</dbReference>
<dbReference type="Bgee" id="ENSMUSG00000053211">
    <property type="expression patterns" value="Expressed in ureteric bud trunk and 25 other cell types or tissues"/>
</dbReference>
<dbReference type="GO" id="GO:0005634">
    <property type="term" value="C:nucleus"/>
    <property type="evidence" value="ECO:0007669"/>
    <property type="project" value="UniProtKB-SubCell"/>
</dbReference>
<dbReference type="GO" id="GO:0003677">
    <property type="term" value="F:DNA binding"/>
    <property type="evidence" value="ECO:0007669"/>
    <property type="project" value="UniProtKB-KW"/>
</dbReference>
<dbReference type="GO" id="GO:0008270">
    <property type="term" value="F:zinc ion binding"/>
    <property type="evidence" value="ECO:0007669"/>
    <property type="project" value="UniProtKB-KW"/>
</dbReference>
<dbReference type="GO" id="GO:0006355">
    <property type="term" value="P:regulation of DNA-templated transcription"/>
    <property type="evidence" value="ECO:0007669"/>
    <property type="project" value="InterPro"/>
</dbReference>
<dbReference type="FunFam" id="3.30.160.60:FF:000054">
    <property type="entry name" value="Zinc finger protein 711"/>
    <property type="match status" value="1"/>
</dbReference>
<dbReference type="FunFam" id="3.30.160.60:FF:000209">
    <property type="entry name" value="Zinc finger protein 711"/>
    <property type="match status" value="3"/>
</dbReference>
<dbReference type="FunFam" id="3.30.160.60:FF:000170">
    <property type="entry name" value="Zinc finger protein 711 isoform X2"/>
    <property type="match status" value="1"/>
</dbReference>
<dbReference type="FunFam" id="3.30.160.60:FF:002525">
    <property type="entry name" value="Zinc finger protein Y-linked"/>
    <property type="match status" value="1"/>
</dbReference>
<dbReference type="FunFam" id="3.30.160.60:FF:000461">
    <property type="entry name" value="Zinc finger X-chromosomal protein-like protein"/>
    <property type="match status" value="1"/>
</dbReference>
<dbReference type="Gene3D" id="3.30.160.60">
    <property type="entry name" value="Classic Zinc Finger"/>
    <property type="match status" value="8"/>
</dbReference>
<dbReference type="InterPro" id="IPR050752">
    <property type="entry name" value="C2H2-ZF_domain"/>
</dbReference>
<dbReference type="InterPro" id="IPR006794">
    <property type="entry name" value="Transcrp_activ_Zfx/Zfy-dom"/>
</dbReference>
<dbReference type="InterPro" id="IPR036236">
    <property type="entry name" value="Znf_C2H2_sf"/>
</dbReference>
<dbReference type="InterPro" id="IPR013087">
    <property type="entry name" value="Znf_C2H2_type"/>
</dbReference>
<dbReference type="PANTHER" id="PTHR24384:SF189">
    <property type="entry name" value="C2H2-TYPE DOMAIN-CONTAINING PROTEIN-RELATED"/>
    <property type="match status" value="1"/>
</dbReference>
<dbReference type="PANTHER" id="PTHR24384">
    <property type="entry name" value="FINGER PUTATIVE TRANSCRIPTION FACTOR FAMILY-RELATED"/>
    <property type="match status" value="1"/>
</dbReference>
<dbReference type="Pfam" id="PF00096">
    <property type="entry name" value="zf-C2H2"/>
    <property type="match status" value="6"/>
</dbReference>
<dbReference type="Pfam" id="PF04704">
    <property type="entry name" value="Zfx_Zfy_act"/>
    <property type="match status" value="1"/>
</dbReference>
<dbReference type="SMART" id="SM00355">
    <property type="entry name" value="ZnF_C2H2"/>
    <property type="match status" value="13"/>
</dbReference>
<dbReference type="SUPFAM" id="SSF57667">
    <property type="entry name" value="beta-beta-alpha zinc fingers"/>
    <property type="match status" value="6"/>
</dbReference>
<dbReference type="PROSITE" id="PS00028">
    <property type="entry name" value="ZINC_FINGER_C2H2_1"/>
    <property type="match status" value="7"/>
</dbReference>
<dbReference type="PROSITE" id="PS50157">
    <property type="entry name" value="ZINC_FINGER_C2H2_2"/>
    <property type="match status" value="9"/>
</dbReference>